<sequence>MSRNQSREARPNREVAQTVSERVYVETQGCQMNDYDAERLVDVLVSQAGARRVDRPEEADLLLLNTCSVREKAQEKVFSQLGRWRRYKQDNPTVLIGVGGCVASQEGAEILRRAPFVDLVFGPQTLHRLPQMLARRRSGASAQVDVDFPEIEKFDHLPQPRAEGPTAYVSVMEGCSKYCSFCVVPYTRGDEISRPVADVLAEVRSLAEQGVREVNLLGQNVNAYAGALDDGERADLGLLIEAVARIPGIDRIRFTTSHPAEFHSGLIDAYRDVPELADFLHLPVQSGSDLILKLMKRGHDIAAYEALIDQIRAVRPGLVLATDLIVGFPGETEAEFEETLAMVDRVGFDGGAFSFVYSPRPGTPAAELHDGVPEADKRAWLQRLQARLHEQQSAAARALLGTRQSVLIDGPSRRDPRELSGRTSGNRVVNFPGDPSWIGRFAEVEITDARTHSLRGRVVSVEGQAMHAAVGAGG</sequence>
<evidence type="ECO:0000255" key="1">
    <source>
        <dbReference type="HAMAP-Rule" id="MF_01864"/>
    </source>
</evidence>
<evidence type="ECO:0000255" key="2">
    <source>
        <dbReference type="PROSITE-ProRule" id="PRU01266"/>
    </source>
</evidence>
<accession>A1WVF7</accession>
<organism>
    <name type="scientific">Halorhodospira halophila (strain DSM 244 / SL1)</name>
    <name type="common">Ectothiorhodospira halophila (strain DSM 244 / SL1)</name>
    <dbReference type="NCBI Taxonomy" id="349124"/>
    <lineage>
        <taxon>Bacteria</taxon>
        <taxon>Pseudomonadati</taxon>
        <taxon>Pseudomonadota</taxon>
        <taxon>Gammaproteobacteria</taxon>
        <taxon>Chromatiales</taxon>
        <taxon>Ectothiorhodospiraceae</taxon>
        <taxon>Halorhodospira</taxon>
    </lineage>
</organism>
<gene>
    <name evidence="1" type="primary">miaB</name>
    <name type="ordered locus">Hhal_0893</name>
</gene>
<comment type="function">
    <text evidence="1">Catalyzes the methylthiolation of N6-(dimethylallyl)adenosine (i(6)A), leading to the formation of 2-methylthio-N6-(dimethylallyl)adenosine (ms(2)i(6)A) at position 37 in tRNAs that read codons beginning with uridine.</text>
</comment>
<comment type="catalytic activity">
    <reaction evidence="1">
        <text>N(6)-dimethylallyladenosine(37) in tRNA + (sulfur carrier)-SH + AH2 + 2 S-adenosyl-L-methionine = 2-methylsulfanyl-N(6)-dimethylallyladenosine(37) in tRNA + (sulfur carrier)-H + 5'-deoxyadenosine + L-methionine + A + S-adenosyl-L-homocysteine + 2 H(+)</text>
        <dbReference type="Rhea" id="RHEA:37067"/>
        <dbReference type="Rhea" id="RHEA-COMP:10375"/>
        <dbReference type="Rhea" id="RHEA-COMP:10376"/>
        <dbReference type="Rhea" id="RHEA-COMP:14737"/>
        <dbReference type="Rhea" id="RHEA-COMP:14739"/>
        <dbReference type="ChEBI" id="CHEBI:13193"/>
        <dbReference type="ChEBI" id="CHEBI:15378"/>
        <dbReference type="ChEBI" id="CHEBI:17319"/>
        <dbReference type="ChEBI" id="CHEBI:17499"/>
        <dbReference type="ChEBI" id="CHEBI:29917"/>
        <dbReference type="ChEBI" id="CHEBI:57844"/>
        <dbReference type="ChEBI" id="CHEBI:57856"/>
        <dbReference type="ChEBI" id="CHEBI:59789"/>
        <dbReference type="ChEBI" id="CHEBI:64428"/>
        <dbReference type="ChEBI" id="CHEBI:74415"/>
        <dbReference type="ChEBI" id="CHEBI:74417"/>
        <dbReference type="EC" id="2.8.4.3"/>
    </reaction>
</comment>
<comment type="cofactor">
    <cofactor evidence="1">
        <name>[4Fe-4S] cluster</name>
        <dbReference type="ChEBI" id="CHEBI:49883"/>
    </cofactor>
    <text evidence="1">Binds 2 [4Fe-4S] clusters. One cluster is coordinated with 3 cysteines and an exchangeable S-adenosyl-L-methionine.</text>
</comment>
<comment type="subunit">
    <text evidence="1">Monomer.</text>
</comment>
<comment type="subcellular location">
    <subcellularLocation>
        <location evidence="1">Cytoplasm</location>
    </subcellularLocation>
</comment>
<comment type="similarity">
    <text evidence="1">Belongs to the methylthiotransferase family. MiaB subfamily.</text>
</comment>
<dbReference type="EC" id="2.8.4.3" evidence="1"/>
<dbReference type="EMBL" id="CP000544">
    <property type="protein sequence ID" value="ABM61669.1"/>
    <property type="molecule type" value="Genomic_DNA"/>
</dbReference>
<dbReference type="SMR" id="A1WVF7"/>
<dbReference type="STRING" id="349124.Hhal_0893"/>
<dbReference type="KEGG" id="hha:Hhal_0893"/>
<dbReference type="eggNOG" id="COG0621">
    <property type="taxonomic scope" value="Bacteria"/>
</dbReference>
<dbReference type="HOGENOM" id="CLU_018697_2_2_6"/>
<dbReference type="OrthoDB" id="9805215at2"/>
<dbReference type="Proteomes" id="UP000000647">
    <property type="component" value="Chromosome"/>
</dbReference>
<dbReference type="GO" id="GO:0005829">
    <property type="term" value="C:cytosol"/>
    <property type="evidence" value="ECO:0007669"/>
    <property type="project" value="TreeGrafter"/>
</dbReference>
<dbReference type="GO" id="GO:0051539">
    <property type="term" value="F:4 iron, 4 sulfur cluster binding"/>
    <property type="evidence" value="ECO:0007669"/>
    <property type="project" value="UniProtKB-UniRule"/>
</dbReference>
<dbReference type="GO" id="GO:0046872">
    <property type="term" value="F:metal ion binding"/>
    <property type="evidence" value="ECO:0007669"/>
    <property type="project" value="UniProtKB-KW"/>
</dbReference>
<dbReference type="GO" id="GO:0035597">
    <property type="term" value="F:N6-isopentenyladenosine methylthiotransferase activity"/>
    <property type="evidence" value="ECO:0007669"/>
    <property type="project" value="TreeGrafter"/>
</dbReference>
<dbReference type="CDD" id="cd01335">
    <property type="entry name" value="Radical_SAM"/>
    <property type="match status" value="1"/>
</dbReference>
<dbReference type="FunFam" id="3.40.50.12160:FF:000001">
    <property type="entry name" value="tRNA-2-methylthio-N(6)-dimethylallyladenosine synthase"/>
    <property type="match status" value="1"/>
</dbReference>
<dbReference type="FunFam" id="3.80.30.20:FF:000001">
    <property type="entry name" value="tRNA-2-methylthio-N(6)-dimethylallyladenosine synthase 2"/>
    <property type="match status" value="1"/>
</dbReference>
<dbReference type="Gene3D" id="3.40.50.12160">
    <property type="entry name" value="Methylthiotransferase, N-terminal domain"/>
    <property type="match status" value="1"/>
</dbReference>
<dbReference type="Gene3D" id="3.80.30.20">
    <property type="entry name" value="tm_1862 like domain"/>
    <property type="match status" value="1"/>
</dbReference>
<dbReference type="HAMAP" id="MF_01864">
    <property type="entry name" value="tRNA_metthiotr_MiaB"/>
    <property type="match status" value="1"/>
</dbReference>
<dbReference type="InterPro" id="IPR006638">
    <property type="entry name" value="Elp3/MiaA/NifB-like_rSAM"/>
</dbReference>
<dbReference type="InterPro" id="IPR005839">
    <property type="entry name" value="Methylthiotransferase"/>
</dbReference>
<dbReference type="InterPro" id="IPR020612">
    <property type="entry name" value="Methylthiotransferase_CS"/>
</dbReference>
<dbReference type="InterPro" id="IPR013848">
    <property type="entry name" value="Methylthiotransferase_N"/>
</dbReference>
<dbReference type="InterPro" id="IPR038135">
    <property type="entry name" value="Methylthiotransferase_N_sf"/>
</dbReference>
<dbReference type="InterPro" id="IPR006463">
    <property type="entry name" value="MiaB_methiolase"/>
</dbReference>
<dbReference type="InterPro" id="IPR007197">
    <property type="entry name" value="rSAM"/>
</dbReference>
<dbReference type="InterPro" id="IPR023404">
    <property type="entry name" value="rSAM_horseshoe"/>
</dbReference>
<dbReference type="InterPro" id="IPR002792">
    <property type="entry name" value="TRAM_dom"/>
</dbReference>
<dbReference type="NCBIfam" id="TIGR01574">
    <property type="entry name" value="miaB-methiolase"/>
    <property type="match status" value="1"/>
</dbReference>
<dbReference type="NCBIfam" id="TIGR00089">
    <property type="entry name" value="MiaB/RimO family radical SAM methylthiotransferase"/>
    <property type="match status" value="1"/>
</dbReference>
<dbReference type="PANTHER" id="PTHR43020">
    <property type="entry name" value="CDK5 REGULATORY SUBUNIT-ASSOCIATED PROTEIN 1"/>
    <property type="match status" value="1"/>
</dbReference>
<dbReference type="PANTHER" id="PTHR43020:SF2">
    <property type="entry name" value="MITOCHONDRIAL TRNA METHYLTHIOTRANSFERASE CDK5RAP1"/>
    <property type="match status" value="1"/>
</dbReference>
<dbReference type="Pfam" id="PF04055">
    <property type="entry name" value="Radical_SAM"/>
    <property type="match status" value="1"/>
</dbReference>
<dbReference type="Pfam" id="PF01938">
    <property type="entry name" value="TRAM"/>
    <property type="match status" value="1"/>
</dbReference>
<dbReference type="Pfam" id="PF00919">
    <property type="entry name" value="UPF0004"/>
    <property type="match status" value="1"/>
</dbReference>
<dbReference type="SFLD" id="SFLDF00273">
    <property type="entry name" value="(dimethylallyl)adenosine_tRNA"/>
    <property type="match status" value="1"/>
</dbReference>
<dbReference type="SFLD" id="SFLDG01082">
    <property type="entry name" value="B12-binding_domain_containing"/>
    <property type="match status" value="1"/>
</dbReference>
<dbReference type="SFLD" id="SFLDS00029">
    <property type="entry name" value="Radical_SAM"/>
    <property type="match status" value="1"/>
</dbReference>
<dbReference type="SMART" id="SM00729">
    <property type="entry name" value="Elp3"/>
    <property type="match status" value="1"/>
</dbReference>
<dbReference type="SUPFAM" id="SSF102114">
    <property type="entry name" value="Radical SAM enzymes"/>
    <property type="match status" value="1"/>
</dbReference>
<dbReference type="PROSITE" id="PS51449">
    <property type="entry name" value="MTTASE_N"/>
    <property type="match status" value="1"/>
</dbReference>
<dbReference type="PROSITE" id="PS01278">
    <property type="entry name" value="MTTASE_RADICAL"/>
    <property type="match status" value="1"/>
</dbReference>
<dbReference type="PROSITE" id="PS51918">
    <property type="entry name" value="RADICAL_SAM"/>
    <property type="match status" value="1"/>
</dbReference>
<dbReference type="PROSITE" id="PS50926">
    <property type="entry name" value="TRAM"/>
    <property type="match status" value="1"/>
</dbReference>
<reference key="1">
    <citation type="submission" date="2006-12" db="EMBL/GenBank/DDBJ databases">
        <title>Complete sequence of Halorhodospira halophila SL1.</title>
        <authorList>
            <consortium name="US DOE Joint Genome Institute"/>
            <person name="Copeland A."/>
            <person name="Lucas S."/>
            <person name="Lapidus A."/>
            <person name="Barry K."/>
            <person name="Detter J.C."/>
            <person name="Glavina del Rio T."/>
            <person name="Hammon N."/>
            <person name="Israni S."/>
            <person name="Dalin E."/>
            <person name="Tice H."/>
            <person name="Pitluck S."/>
            <person name="Saunders E."/>
            <person name="Brettin T."/>
            <person name="Bruce D."/>
            <person name="Han C."/>
            <person name="Tapia R."/>
            <person name="Schmutz J."/>
            <person name="Larimer F."/>
            <person name="Land M."/>
            <person name="Hauser L."/>
            <person name="Kyrpides N."/>
            <person name="Mikhailova N."/>
            <person name="Hoff W."/>
            <person name="Richardson P."/>
        </authorList>
    </citation>
    <scope>NUCLEOTIDE SEQUENCE [LARGE SCALE GENOMIC DNA]</scope>
    <source>
        <strain>DSM 244 / SL1</strain>
    </source>
</reference>
<feature type="chain" id="PRO_0000374334" description="tRNA-2-methylthio-N(6)-dimethylallyladenosine synthase">
    <location>
        <begin position="1"/>
        <end position="474"/>
    </location>
</feature>
<feature type="domain" description="MTTase N-terminal" evidence="1">
    <location>
        <begin position="21"/>
        <end position="138"/>
    </location>
</feature>
<feature type="domain" description="Radical SAM core" evidence="2">
    <location>
        <begin position="161"/>
        <end position="395"/>
    </location>
</feature>
<feature type="domain" description="TRAM" evidence="1">
    <location>
        <begin position="397"/>
        <end position="460"/>
    </location>
</feature>
<feature type="binding site" evidence="1">
    <location>
        <position position="30"/>
    </location>
    <ligand>
        <name>[4Fe-4S] cluster</name>
        <dbReference type="ChEBI" id="CHEBI:49883"/>
        <label>1</label>
    </ligand>
</feature>
<feature type="binding site" evidence="1">
    <location>
        <position position="67"/>
    </location>
    <ligand>
        <name>[4Fe-4S] cluster</name>
        <dbReference type="ChEBI" id="CHEBI:49883"/>
        <label>1</label>
    </ligand>
</feature>
<feature type="binding site" evidence="1">
    <location>
        <position position="101"/>
    </location>
    <ligand>
        <name>[4Fe-4S] cluster</name>
        <dbReference type="ChEBI" id="CHEBI:49883"/>
        <label>1</label>
    </ligand>
</feature>
<feature type="binding site" evidence="1">
    <location>
        <position position="175"/>
    </location>
    <ligand>
        <name>[4Fe-4S] cluster</name>
        <dbReference type="ChEBI" id="CHEBI:49883"/>
        <label>2</label>
        <note>4Fe-4S-S-AdoMet</note>
    </ligand>
</feature>
<feature type="binding site" evidence="1">
    <location>
        <position position="179"/>
    </location>
    <ligand>
        <name>[4Fe-4S] cluster</name>
        <dbReference type="ChEBI" id="CHEBI:49883"/>
        <label>2</label>
        <note>4Fe-4S-S-AdoMet</note>
    </ligand>
</feature>
<feature type="binding site" evidence="1">
    <location>
        <position position="182"/>
    </location>
    <ligand>
        <name>[4Fe-4S] cluster</name>
        <dbReference type="ChEBI" id="CHEBI:49883"/>
        <label>2</label>
        <note>4Fe-4S-S-AdoMet</note>
    </ligand>
</feature>
<name>MIAB_HALHL</name>
<keyword id="KW-0004">4Fe-4S</keyword>
<keyword id="KW-0963">Cytoplasm</keyword>
<keyword id="KW-0408">Iron</keyword>
<keyword id="KW-0411">Iron-sulfur</keyword>
<keyword id="KW-0479">Metal-binding</keyword>
<keyword id="KW-1185">Reference proteome</keyword>
<keyword id="KW-0949">S-adenosyl-L-methionine</keyword>
<keyword id="KW-0808">Transferase</keyword>
<keyword id="KW-0819">tRNA processing</keyword>
<protein>
    <recommendedName>
        <fullName evidence="1">tRNA-2-methylthio-N(6)-dimethylallyladenosine synthase</fullName>
        <ecNumber evidence="1">2.8.4.3</ecNumber>
    </recommendedName>
    <alternativeName>
        <fullName evidence="1">(Dimethylallyl)adenosine tRNA methylthiotransferase MiaB</fullName>
    </alternativeName>
    <alternativeName>
        <fullName evidence="1">tRNA-i(6)A37 methylthiotransferase</fullName>
    </alternativeName>
</protein>
<proteinExistence type="inferred from homology"/>